<reference key="1">
    <citation type="journal article" date="2009" name="BMC Genomics">
        <title>Genome evolution driven by host adaptations results in a more virulent and antimicrobial-resistant Streptococcus pneumoniae serotype 14.</title>
        <authorList>
            <person name="Ding F."/>
            <person name="Tang P."/>
            <person name="Hsu M.-H."/>
            <person name="Cui P."/>
            <person name="Hu S."/>
            <person name="Yu J."/>
            <person name="Chiu C.-H."/>
        </authorList>
    </citation>
    <scope>NUCLEOTIDE SEQUENCE [LARGE SCALE GENOMIC DNA]</scope>
    <source>
        <strain>CGSP14</strain>
    </source>
</reference>
<feature type="chain" id="PRO_1000198240" description="UPF0297 protein SPCG_0205">
    <location>
        <begin position="1"/>
        <end position="88"/>
    </location>
</feature>
<dbReference type="EMBL" id="CP001033">
    <property type="protein sequence ID" value="ACB89457.1"/>
    <property type="molecule type" value="Genomic_DNA"/>
</dbReference>
<dbReference type="RefSeq" id="WP_000507059.1">
    <property type="nucleotide sequence ID" value="NC_010582.1"/>
</dbReference>
<dbReference type="SMR" id="B2IS27"/>
<dbReference type="KEGG" id="spw:SPCG_0205"/>
<dbReference type="HOGENOM" id="CLU_162466_0_0_9"/>
<dbReference type="HAMAP" id="MF_01507">
    <property type="entry name" value="UPF0297"/>
    <property type="match status" value="1"/>
</dbReference>
<dbReference type="InterPro" id="IPR009309">
    <property type="entry name" value="IreB"/>
</dbReference>
<dbReference type="NCBIfam" id="NF003997">
    <property type="entry name" value="PRK05473.1"/>
    <property type="match status" value="1"/>
</dbReference>
<dbReference type="PANTHER" id="PTHR40067">
    <property type="entry name" value="UPF0297 PROTEIN YRZL"/>
    <property type="match status" value="1"/>
</dbReference>
<dbReference type="PANTHER" id="PTHR40067:SF1">
    <property type="entry name" value="UPF0297 PROTEIN YRZL"/>
    <property type="match status" value="1"/>
</dbReference>
<dbReference type="Pfam" id="PF06135">
    <property type="entry name" value="IreB"/>
    <property type="match status" value="1"/>
</dbReference>
<dbReference type="PIRSF" id="PIRSF037258">
    <property type="entry name" value="DUF965_bac"/>
    <property type="match status" value="1"/>
</dbReference>
<accession>B2IS27</accession>
<proteinExistence type="inferred from homology"/>
<gene>
    <name type="ordered locus">SPCG_0205</name>
</gene>
<protein>
    <recommendedName>
        <fullName evidence="1">UPF0297 protein SPCG_0205</fullName>
    </recommendedName>
</protein>
<organism>
    <name type="scientific">Streptococcus pneumoniae (strain CGSP14)</name>
    <dbReference type="NCBI Taxonomy" id="516950"/>
    <lineage>
        <taxon>Bacteria</taxon>
        <taxon>Bacillati</taxon>
        <taxon>Bacillota</taxon>
        <taxon>Bacilli</taxon>
        <taxon>Lactobacillales</taxon>
        <taxon>Streptococcaceae</taxon>
        <taxon>Streptococcus</taxon>
    </lineage>
</organism>
<comment type="similarity">
    <text evidence="1">Belongs to the UPF0297 family.</text>
</comment>
<evidence type="ECO:0000255" key="1">
    <source>
        <dbReference type="HAMAP-Rule" id="MF_01507"/>
    </source>
</evidence>
<name>Y205_STRPS</name>
<sequence length="88" mass="10227">MGFTEETVRFKLDDSNKKEISETLTDVYASLNDKGYNPINQIVGYVLSGDPAYVPRYNNARNQIRKYERDEIVEELVRYYLKGQGVDL</sequence>